<dbReference type="EMBL" id="CP000410">
    <property type="protein sequence ID" value="ABJ53899.1"/>
    <property type="molecule type" value="Genomic_DNA"/>
</dbReference>
<dbReference type="SMR" id="A0A0H2ZMB4"/>
<dbReference type="PaxDb" id="373153-SPD_0675"/>
<dbReference type="KEGG" id="spd:SPD_0675"/>
<dbReference type="eggNOG" id="COG1837">
    <property type="taxonomic scope" value="Bacteria"/>
</dbReference>
<dbReference type="HOGENOM" id="CLU_132074_1_2_9"/>
<dbReference type="BioCyc" id="SPNE373153:G1G6V-744-MONOMER"/>
<dbReference type="Proteomes" id="UP000001452">
    <property type="component" value="Chromosome"/>
</dbReference>
<dbReference type="GO" id="GO:0005737">
    <property type="term" value="C:cytoplasm"/>
    <property type="evidence" value="ECO:0007669"/>
    <property type="project" value="UniProtKB-SubCell"/>
</dbReference>
<dbReference type="GO" id="GO:0003723">
    <property type="term" value="F:RNA binding"/>
    <property type="evidence" value="ECO:0007669"/>
    <property type="project" value="UniProtKB-UniRule"/>
</dbReference>
<dbReference type="GO" id="GO:0071555">
    <property type="term" value="P:cell wall organization"/>
    <property type="evidence" value="ECO:0007669"/>
    <property type="project" value="UniProtKB-KW"/>
</dbReference>
<dbReference type="GO" id="GO:0009252">
    <property type="term" value="P:peptidoglycan biosynthetic process"/>
    <property type="evidence" value="ECO:0007669"/>
    <property type="project" value="UniProtKB-UniRule"/>
</dbReference>
<dbReference type="GO" id="GO:0008360">
    <property type="term" value="P:regulation of cell shape"/>
    <property type="evidence" value="ECO:0007669"/>
    <property type="project" value="UniProtKB-KW"/>
</dbReference>
<dbReference type="CDD" id="cd22533">
    <property type="entry name" value="KH-II_YlqC-like"/>
    <property type="match status" value="1"/>
</dbReference>
<dbReference type="Gene3D" id="3.30.300.20">
    <property type="match status" value="1"/>
</dbReference>
<dbReference type="HAMAP" id="MF_00088">
    <property type="entry name" value="KhpA"/>
    <property type="match status" value="1"/>
</dbReference>
<dbReference type="InterPro" id="IPR015946">
    <property type="entry name" value="KH_dom-like_a/b"/>
</dbReference>
<dbReference type="InterPro" id="IPR020627">
    <property type="entry name" value="KhpA"/>
</dbReference>
<dbReference type="PANTHER" id="PTHR34654:SF1">
    <property type="entry name" value="RNA-BINDING PROTEIN KHPA"/>
    <property type="match status" value="1"/>
</dbReference>
<dbReference type="PANTHER" id="PTHR34654">
    <property type="entry name" value="UPF0109 PROTEIN SCO5592"/>
    <property type="match status" value="1"/>
</dbReference>
<dbReference type="Pfam" id="PF13083">
    <property type="entry name" value="KH_KhpA-B"/>
    <property type="match status" value="1"/>
</dbReference>
<dbReference type="PROSITE" id="PS50084">
    <property type="entry name" value="KH_TYPE_1"/>
    <property type="match status" value="1"/>
</dbReference>
<feature type="chain" id="PRO_0000454538" description="RNA-binding protein KhpA">
    <location>
        <begin position="1"/>
        <end position="79"/>
    </location>
</feature>
<feature type="domain" description="KH" evidence="1">
    <location>
        <begin position="32"/>
        <end position="79"/>
    </location>
</feature>
<feature type="mutagenesis site" description="Decreased amount of protein, slow growth." evidence="2">
    <original>GRKG</original>
    <variation>ARKA</variation>
    <location>
        <begin position="49"/>
        <end position="52"/>
    </location>
</feature>
<feature type="mutagenesis site" description="50% protein, intermediate growth rate." evidence="2">
    <original>G</original>
    <variation>A</variation>
    <location>
        <position position="49"/>
    </location>
</feature>
<feature type="mutagenesis site" description="Decreased amount of protein, slow growth." evidence="2">
    <original>RK</original>
    <variation>DD</variation>
    <location>
        <begin position="50"/>
        <end position="51"/>
    </location>
</feature>
<feature type="mutagenesis site" description="Nearly wild-type protein level, wild-type growth rate." evidence="2">
    <original>G</original>
    <variation>A</variation>
    <location>
        <position position="52"/>
    </location>
</feature>
<feature type="mutagenesis site" description="Suppresses a pbp2b (penA) deletion." evidence="2">
    <location>
        <begin position="72"/>
        <end position="79"/>
    </location>
</feature>
<keyword id="KW-0133">Cell shape</keyword>
<keyword id="KW-0961">Cell wall biogenesis/degradation</keyword>
<keyword id="KW-0143">Chaperone</keyword>
<keyword id="KW-0963">Cytoplasm</keyword>
<keyword id="KW-1185">Reference proteome</keyword>
<keyword id="KW-0694">RNA-binding</keyword>
<protein>
    <recommendedName>
        <fullName evidence="1 3">RNA-binding protein KhpA</fullName>
    </recommendedName>
    <alternativeName>
        <fullName evidence="1 3">KH-domain protein A</fullName>
    </alternativeName>
</protein>
<sequence>MDTIENLIIAIVKPLISQPDALTIKIEDTPEFLEYHLNLDQSDVGRVIGRKGRTISAIRTIVYSVPTEYKKVRIVIDEK</sequence>
<comment type="function">
    <text evidence="2 4">A probable RNA chaperone. Forms a complex with KhpB which presumably binds to about 170 cellular RNAs (mRNA, tRNA intergenic RNA and sRNAs); the proteins alone each bind the same set of RNAs. A mutation in this gene suppresses the requirement for PBP2b (penA, a transpeptidase) in peripheral peptidoglycan (PG) synthesis (PubMed:28941257). Probably plays a role in PG homeostasis and regulating peripheral PG synthesis (PubMed:28941257).</text>
</comment>
<comment type="subunit">
    <text evidence="1 2">Forms a complex with KhpB (By similarity) (PubMed:28941257). KhpA and KhpB colocalize throughout the cell cycle, with some increase at midcell in dividing cells (PubMed:28941257).</text>
</comment>
<comment type="subcellular location">
    <subcellularLocation>
        <location evidence="1 4">Cytoplasm</location>
    </subcellularLocation>
    <text evidence="2">Some protein localizes to midcell in the septal area, the rest remains in the cytoplasm.</text>
</comment>
<comment type="disruption phenotype">
    <text evidence="2">Suppresses a pbp2b (penA) deletion, grows slowly and is smaller than wild-type; about 50% of the volume of wild-type cells. Increased accumulation of FtsA and FtsZ proteins. Significant up-regulation of genes of the WalRK regulon. Also partially suppresses deletions in other genes involved in peripheral PG synthesis; gpsB, mreCD, rodA and rodZ but not cozE or mltG. Slight increase in net phosphorylation (by StpK/PhpP) of DivIA, slight decrease in phosphorylation of MapZ/StpK. Double khpA-khpB deletions have the same phenotypes.</text>
</comment>
<comment type="similarity">
    <text evidence="1">Belongs to the KhpA RNA-binding protein family.</text>
</comment>
<proteinExistence type="evidence at protein level"/>
<organism>
    <name type="scientific">Streptococcus pneumoniae serotype 2 (strain D39 / NCTC 7466)</name>
    <dbReference type="NCBI Taxonomy" id="373153"/>
    <lineage>
        <taxon>Bacteria</taxon>
        <taxon>Bacillati</taxon>
        <taxon>Bacillota</taxon>
        <taxon>Bacilli</taxon>
        <taxon>Lactobacillales</taxon>
        <taxon>Streptococcaceae</taxon>
        <taxon>Streptococcus</taxon>
    </lineage>
</organism>
<name>KHPA_STRP2</name>
<reference key="1">
    <citation type="journal article" date="2007" name="J. Bacteriol.">
        <title>Genome sequence of Avery's virulent serotype 2 strain D39 of Streptococcus pneumoniae and comparison with that of unencapsulated laboratory strain R6.</title>
        <authorList>
            <person name="Lanie J.A."/>
            <person name="Ng W.-L."/>
            <person name="Kazmierczak K.M."/>
            <person name="Andrzejewski T.M."/>
            <person name="Davidsen T.M."/>
            <person name="Wayne K.J."/>
            <person name="Tettelin H."/>
            <person name="Glass J.I."/>
            <person name="Winkler M.E."/>
        </authorList>
    </citation>
    <scope>NUCLEOTIDE SEQUENCE [LARGE SCALE GENOMIC DNA]</scope>
    <source>
        <strain>D39 / NCTC 7466</strain>
    </source>
</reference>
<reference key="2">
    <citation type="journal article" date="2017" name="Mol. Microbiol.">
        <title>Absence of the KhpA and KhpB (JAG/EloR) RNA-binding proteins suppresses the requirement for PBP2b by overproduction of FtsA in Streptococcus pneumoniae D39.</title>
        <authorList>
            <person name="Zheng J.J."/>
            <person name="Perez A.J."/>
            <person name="Tsui H.T."/>
            <person name="Massidda O."/>
            <person name="Winkler M.E."/>
        </authorList>
    </citation>
    <scope>FUNCTION</scope>
    <scope>INTERACTION WITH KHPB</scope>
    <scope>SUBUNIT</scope>
    <scope>SUBCELLULAR LOCATION</scope>
    <scope>DISRUPTION PHENOTYPE</scope>
    <scope>RNA-BINDING</scope>
    <scope>MUTAGENESIS OF 49-GLY--GLY-52; GLY-49; 50-ARG-LYS-51; GLY-52 AND 72-VAL--LYS-79</scope>
    <source>
        <strain>D39 / NCTC 7466</strain>
    </source>
</reference>
<accession>A0A0H2ZMB4</accession>
<gene>
    <name evidence="1 3" type="primary">khpA</name>
    <name type="ordered locus">SPD_0675</name>
</gene>
<evidence type="ECO:0000255" key="1">
    <source>
        <dbReference type="HAMAP-Rule" id="MF_00088"/>
    </source>
</evidence>
<evidence type="ECO:0000269" key="2">
    <source>
    </source>
</evidence>
<evidence type="ECO:0000303" key="3">
    <source>
    </source>
</evidence>
<evidence type="ECO:0000305" key="4">
    <source>
    </source>
</evidence>